<sequence>MSKEKFERLKPHVNVGTIGHVDHGKTTLTAAICTVLAKVYGGDAKDFASIDNAPEERERGITISTSHVEYDTPARHYAHVDCPGHADYVKNMITGAAQMDGGILVVAATDGPMPQTREHILLGRQVGIPYIIVFMNKCDMVDDEELLELVEMEVRELLSEYDFPGDDCPVIMGSALGALNGEAQWEEKIIELAEALDNYIPEPERAIDLPFILPIEDVFSIQGRGTVVTGRVEQGIVRIGEEVAIIGIKETTTTTCTGVEMFRKLLDEGRAGENVGVLLRGTKRDDVERGQVLAKPGSITPHTTFESEIYVLSKDEGGRHTPFFKGYRPQFYFRTTDVTGTIELPEGVEMVMPGDNIQMKVTLIAPIAMDEGLRFAIREGGRTVGAGVVAKIFE</sequence>
<keyword id="KW-0963">Cytoplasm</keyword>
<keyword id="KW-0251">Elongation factor</keyword>
<keyword id="KW-0342">GTP-binding</keyword>
<keyword id="KW-0378">Hydrolase</keyword>
<keyword id="KW-0460">Magnesium</keyword>
<keyword id="KW-0479">Metal-binding</keyword>
<keyword id="KW-0547">Nucleotide-binding</keyword>
<keyword id="KW-0648">Protein biosynthesis</keyword>
<keyword id="KW-1185">Reference proteome</keyword>
<accession>Q6LLV5</accession>
<reference key="1">
    <citation type="journal article" date="2005" name="Science">
        <title>Life at depth: Photobacterium profundum genome sequence and expression analysis.</title>
        <authorList>
            <person name="Vezzi A."/>
            <person name="Campanaro S."/>
            <person name="D'Angelo M."/>
            <person name="Simonato F."/>
            <person name="Vitulo N."/>
            <person name="Lauro F.M."/>
            <person name="Cestaro A."/>
            <person name="Malacrida G."/>
            <person name="Simionati B."/>
            <person name="Cannata N."/>
            <person name="Romualdi C."/>
            <person name="Bartlett D.H."/>
            <person name="Valle G."/>
        </authorList>
    </citation>
    <scope>NUCLEOTIDE SEQUENCE [LARGE SCALE GENOMIC DNA]</scope>
    <source>
        <strain>ATCC BAA-1253 / SS9</strain>
    </source>
</reference>
<organism>
    <name type="scientific">Photobacterium profundum (strain SS9)</name>
    <dbReference type="NCBI Taxonomy" id="298386"/>
    <lineage>
        <taxon>Bacteria</taxon>
        <taxon>Pseudomonadati</taxon>
        <taxon>Pseudomonadota</taxon>
        <taxon>Gammaproteobacteria</taxon>
        <taxon>Vibrionales</taxon>
        <taxon>Vibrionaceae</taxon>
        <taxon>Photobacterium</taxon>
    </lineage>
</organism>
<comment type="function">
    <text evidence="2">GTP hydrolase that promotes the GTP-dependent binding of aminoacyl-tRNA to the A-site of ribosomes during protein biosynthesis.</text>
</comment>
<comment type="catalytic activity">
    <reaction evidence="2">
        <text>GTP + H2O = GDP + phosphate + H(+)</text>
        <dbReference type="Rhea" id="RHEA:19669"/>
        <dbReference type="ChEBI" id="CHEBI:15377"/>
        <dbReference type="ChEBI" id="CHEBI:15378"/>
        <dbReference type="ChEBI" id="CHEBI:37565"/>
        <dbReference type="ChEBI" id="CHEBI:43474"/>
        <dbReference type="ChEBI" id="CHEBI:58189"/>
        <dbReference type="EC" id="3.6.5.3"/>
    </reaction>
    <physiologicalReaction direction="left-to-right" evidence="2">
        <dbReference type="Rhea" id="RHEA:19670"/>
    </physiologicalReaction>
</comment>
<comment type="subunit">
    <text evidence="2">Monomer.</text>
</comment>
<comment type="subcellular location">
    <subcellularLocation>
        <location evidence="2">Cytoplasm</location>
    </subcellularLocation>
</comment>
<comment type="similarity">
    <text evidence="2">Belongs to the TRAFAC class translation factor GTPase superfamily. Classic translation factor GTPase family. EF-Tu/EF-1A subfamily.</text>
</comment>
<comment type="sequence caution" evidence="3">
    <conflict type="erroneous initiation">
        <sequence resource="EMBL-CDS" id="CAG21723"/>
    </conflict>
</comment>
<protein>
    <recommendedName>
        <fullName evidence="2">Elongation factor Tu 2</fullName>
        <shortName evidence="2">EF-Tu 2</shortName>
        <ecNumber evidence="2">3.6.5.3</ecNumber>
    </recommendedName>
</protein>
<name>EFTU2_PHOPR</name>
<gene>
    <name evidence="2" type="primary">tuf2</name>
    <name type="ordered locus">PBPRA3439</name>
</gene>
<evidence type="ECO:0000250" key="1"/>
<evidence type="ECO:0000255" key="2">
    <source>
        <dbReference type="HAMAP-Rule" id="MF_00118"/>
    </source>
</evidence>
<evidence type="ECO:0000305" key="3"/>
<dbReference type="EC" id="3.6.5.3" evidence="2"/>
<dbReference type="EMBL" id="CR378674">
    <property type="protein sequence ID" value="CAG21723.1"/>
    <property type="status" value="ALT_INIT"/>
    <property type="molecule type" value="Genomic_DNA"/>
</dbReference>
<dbReference type="RefSeq" id="WP_011219964.1">
    <property type="nucleotide sequence ID" value="NC_006370.1"/>
</dbReference>
<dbReference type="SMR" id="Q6LLV5"/>
<dbReference type="STRING" id="298386.PBPRA3439"/>
<dbReference type="KEGG" id="ppr:PBPRA3439"/>
<dbReference type="eggNOG" id="COG0050">
    <property type="taxonomic scope" value="Bacteria"/>
</dbReference>
<dbReference type="HOGENOM" id="CLU_007265_0_2_6"/>
<dbReference type="Proteomes" id="UP000000593">
    <property type="component" value="Chromosome 1"/>
</dbReference>
<dbReference type="GO" id="GO:0005829">
    <property type="term" value="C:cytosol"/>
    <property type="evidence" value="ECO:0007669"/>
    <property type="project" value="TreeGrafter"/>
</dbReference>
<dbReference type="GO" id="GO:0005525">
    <property type="term" value="F:GTP binding"/>
    <property type="evidence" value="ECO:0007669"/>
    <property type="project" value="UniProtKB-UniRule"/>
</dbReference>
<dbReference type="GO" id="GO:0003924">
    <property type="term" value="F:GTPase activity"/>
    <property type="evidence" value="ECO:0007669"/>
    <property type="project" value="InterPro"/>
</dbReference>
<dbReference type="GO" id="GO:0097216">
    <property type="term" value="F:guanosine tetraphosphate binding"/>
    <property type="evidence" value="ECO:0007669"/>
    <property type="project" value="UniProtKB-ARBA"/>
</dbReference>
<dbReference type="GO" id="GO:0003746">
    <property type="term" value="F:translation elongation factor activity"/>
    <property type="evidence" value="ECO:0007669"/>
    <property type="project" value="UniProtKB-UniRule"/>
</dbReference>
<dbReference type="CDD" id="cd01884">
    <property type="entry name" value="EF_Tu"/>
    <property type="match status" value="1"/>
</dbReference>
<dbReference type="CDD" id="cd03697">
    <property type="entry name" value="EFTU_II"/>
    <property type="match status" value="1"/>
</dbReference>
<dbReference type="CDD" id="cd03707">
    <property type="entry name" value="EFTU_III"/>
    <property type="match status" value="1"/>
</dbReference>
<dbReference type="FunFam" id="2.40.30.10:FF:000001">
    <property type="entry name" value="Elongation factor Tu"/>
    <property type="match status" value="1"/>
</dbReference>
<dbReference type="FunFam" id="3.40.50.300:FF:000003">
    <property type="entry name" value="Elongation factor Tu"/>
    <property type="match status" value="1"/>
</dbReference>
<dbReference type="Gene3D" id="3.40.50.300">
    <property type="entry name" value="P-loop containing nucleotide triphosphate hydrolases"/>
    <property type="match status" value="1"/>
</dbReference>
<dbReference type="Gene3D" id="2.40.30.10">
    <property type="entry name" value="Translation factors"/>
    <property type="match status" value="2"/>
</dbReference>
<dbReference type="HAMAP" id="MF_00118_B">
    <property type="entry name" value="EF_Tu_B"/>
    <property type="match status" value="1"/>
</dbReference>
<dbReference type="InterPro" id="IPR041709">
    <property type="entry name" value="EF-Tu_GTP-bd"/>
</dbReference>
<dbReference type="InterPro" id="IPR050055">
    <property type="entry name" value="EF-Tu_GTPase"/>
</dbReference>
<dbReference type="InterPro" id="IPR004161">
    <property type="entry name" value="EFTu-like_2"/>
</dbReference>
<dbReference type="InterPro" id="IPR033720">
    <property type="entry name" value="EFTU_2"/>
</dbReference>
<dbReference type="InterPro" id="IPR031157">
    <property type="entry name" value="G_TR_CS"/>
</dbReference>
<dbReference type="InterPro" id="IPR027417">
    <property type="entry name" value="P-loop_NTPase"/>
</dbReference>
<dbReference type="InterPro" id="IPR005225">
    <property type="entry name" value="Small_GTP-bd"/>
</dbReference>
<dbReference type="InterPro" id="IPR000795">
    <property type="entry name" value="T_Tr_GTP-bd_dom"/>
</dbReference>
<dbReference type="InterPro" id="IPR009000">
    <property type="entry name" value="Transl_B-barrel_sf"/>
</dbReference>
<dbReference type="InterPro" id="IPR009001">
    <property type="entry name" value="Transl_elong_EF1A/Init_IF2_C"/>
</dbReference>
<dbReference type="InterPro" id="IPR004541">
    <property type="entry name" value="Transl_elong_EFTu/EF1A_bac/org"/>
</dbReference>
<dbReference type="InterPro" id="IPR004160">
    <property type="entry name" value="Transl_elong_EFTu/EF1A_C"/>
</dbReference>
<dbReference type="NCBIfam" id="TIGR00485">
    <property type="entry name" value="EF-Tu"/>
    <property type="match status" value="1"/>
</dbReference>
<dbReference type="NCBIfam" id="NF000766">
    <property type="entry name" value="PRK00049.1"/>
    <property type="match status" value="1"/>
</dbReference>
<dbReference type="NCBIfam" id="NF009372">
    <property type="entry name" value="PRK12735.1"/>
    <property type="match status" value="1"/>
</dbReference>
<dbReference type="NCBIfam" id="NF009373">
    <property type="entry name" value="PRK12736.1"/>
    <property type="match status" value="1"/>
</dbReference>
<dbReference type="NCBIfam" id="TIGR00231">
    <property type="entry name" value="small_GTP"/>
    <property type="match status" value="1"/>
</dbReference>
<dbReference type="PANTHER" id="PTHR43721:SF22">
    <property type="entry name" value="ELONGATION FACTOR TU, MITOCHONDRIAL"/>
    <property type="match status" value="1"/>
</dbReference>
<dbReference type="PANTHER" id="PTHR43721">
    <property type="entry name" value="ELONGATION FACTOR TU-RELATED"/>
    <property type="match status" value="1"/>
</dbReference>
<dbReference type="Pfam" id="PF00009">
    <property type="entry name" value="GTP_EFTU"/>
    <property type="match status" value="1"/>
</dbReference>
<dbReference type="Pfam" id="PF03144">
    <property type="entry name" value="GTP_EFTU_D2"/>
    <property type="match status" value="1"/>
</dbReference>
<dbReference type="Pfam" id="PF03143">
    <property type="entry name" value="GTP_EFTU_D3"/>
    <property type="match status" value="1"/>
</dbReference>
<dbReference type="PRINTS" id="PR00315">
    <property type="entry name" value="ELONGATNFCT"/>
</dbReference>
<dbReference type="SUPFAM" id="SSF50465">
    <property type="entry name" value="EF-Tu/eEF-1alpha/eIF2-gamma C-terminal domain"/>
    <property type="match status" value="1"/>
</dbReference>
<dbReference type="SUPFAM" id="SSF52540">
    <property type="entry name" value="P-loop containing nucleoside triphosphate hydrolases"/>
    <property type="match status" value="1"/>
</dbReference>
<dbReference type="SUPFAM" id="SSF50447">
    <property type="entry name" value="Translation proteins"/>
    <property type="match status" value="1"/>
</dbReference>
<dbReference type="PROSITE" id="PS00301">
    <property type="entry name" value="G_TR_1"/>
    <property type="match status" value="1"/>
</dbReference>
<dbReference type="PROSITE" id="PS51722">
    <property type="entry name" value="G_TR_2"/>
    <property type="match status" value="1"/>
</dbReference>
<feature type="chain" id="PRO_0000337461" description="Elongation factor Tu 2">
    <location>
        <begin position="1"/>
        <end position="394"/>
    </location>
</feature>
<feature type="domain" description="tr-type G">
    <location>
        <begin position="10"/>
        <end position="204"/>
    </location>
</feature>
<feature type="region of interest" description="G1" evidence="1">
    <location>
        <begin position="19"/>
        <end position="26"/>
    </location>
</feature>
<feature type="region of interest" description="G2" evidence="1">
    <location>
        <begin position="60"/>
        <end position="64"/>
    </location>
</feature>
<feature type="region of interest" description="G3" evidence="1">
    <location>
        <begin position="81"/>
        <end position="84"/>
    </location>
</feature>
<feature type="region of interest" description="G4" evidence="1">
    <location>
        <begin position="136"/>
        <end position="139"/>
    </location>
</feature>
<feature type="region of interest" description="G5" evidence="1">
    <location>
        <begin position="174"/>
        <end position="176"/>
    </location>
</feature>
<feature type="binding site" evidence="2">
    <location>
        <begin position="19"/>
        <end position="26"/>
    </location>
    <ligand>
        <name>GTP</name>
        <dbReference type="ChEBI" id="CHEBI:37565"/>
    </ligand>
</feature>
<feature type="binding site" evidence="2">
    <location>
        <position position="26"/>
    </location>
    <ligand>
        <name>Mg(2+)</name>
        <dbReference type="ChEBI" id="CHEBI:18420"/>
    </ligand>
</feature>
<feature type="binding site" evidence="2">
    <location>
        <begin position="81"/>
        <end position="85"/>
    </location>
    <ligand>
        <name>GTP</name>
        <dbReference type="ChEBI" id="CHEBI:37565"/>
    </ligand>
</feature>
<feature type="binding site" evidence="2">
    <location>
        <begin position="136"/>
        <end position="139"/>
    </location>
    <ligand>
        <name>GTP</name>
        <dbReference type="ChEBI" id="CHEBI:37565"/>
    </ligand>
</feature>
<proteinExistence type="inferred from homology"/>